<evidence type="ECO:0000250" key="1">
    <source>
        <dbReference type="UniProtKB" id="P82619"/>
    </source>
</evidence>
<evidence type="ECO:0000255" key="2"/>
<evidence type="ECO:0000269" key="3">
    <source>
    </source>
</evidence>
<evidence type="ECO:0000303" key="4">
    <source>
    </source>
</evidence>
<evidence type="ECO:0000305" key="5"/>
<evidence type="ECO:0000305" key="6">
    <source>
    </source>
</evidence>
<proteinExistence type="evidence at protein level"/>
<organism>
    <name type="scientific">Karoophasma botterkloofense</name>
    <name type="common">Gladiator</name>
    <name type="synonym">Heel-walker</name>
    <dbReference type="NCBI Taxonomy" id="253132"/>
    <lineage>
        <taxon>Eukaryota</taxon>
        <taxon>Metazoa</taxon>
        <taxon>Ecdysozoa</taxon>
        <taxon>Arthropoda</taxon>
        <taxon>Hexapoda</taxon>
        <taxon>Insecta</taxon>
        <taxon>Pterygota</taxon>
        <taxon>Neoptera</taxon>
        <taxon>Polyneoptera</taxon>
        <taxon>Mantophasmatodea</taxon>
        <taxon>Austrophasmatidae</taxon>
        <taxon>Karoophasma</taxon>
    </lineage>
</organism>
<accession>B3A054</accession>
<feature type="peptide" id="PRO_0000421587" description="Pyrokinin-2" evidence="3">
    <location>
        <begin position="1"/>
        <end position="8"/>
    </location>
</feature>
<feature type="modified residue" description="Leucine amide" evidence="3">
    <location>
        <position position="8"/>
    </location>
</feature>
<comment type="function">
    <text evidence="1">Myoactive.</text>
</comment>
<comment type="subcellular location">
    <subcellularLocation>
        <location evidence="6">Secreted</location>
    </subcellularLocation>
</comment>
<comment type="similarity">
    <text evidence="2">Belongs to the pyrokinin family.</text>
</comment>
<name>PPK2_KARBO</name>
<sequence length="8" mass="884">SPPFAPRL</sequence>
<protein>
    <recommendedName>
        <fullName evidence="4">Pyrokinin-2</fullName>
        <shortName evidence="4">PK-2</shortName>
    </recommendedName>
    <alternativeName>
        <fullName evidence="1">FXPRL-amide</fullName>
    </alternativeName>
</protein>
<reference evidence="5" key="1">
    <citation type="journal article" date="2012" name="Syst. Biol.">
        <title>Peptidomics-based phylogeny and biogeography of Mantophasmatodea (Hexapoda).</title>
        <authorList>
            <person name="Predel R."/>
            <person name="Neupert S."/>
            <person name="Huetteroth W."/>
            <person name="Kahnt J."/>
            <person name="Waidelich D."/>
            <person name="Roth S."/>
        </authorList>
    </citation>
    <scope>PROTEIN SEQUENCE</scope>
    <scope>AMIDATION AT LEU-8</scope>
    <source>
        <tissue evidence="3">Corpora cardiaca</tissue>
    </source>
</reference>
<dbReference type="GO" id="GO:0005576">
    <property type="term" value="C:extracellular region"/>
    <property type="evidence" value="ECO:0007669"/>
    <property type="project" value="UniProtKB-SubCell"/>
</dbReference>
<dbReference type="GO" id="GO:0007218">
    <property type="term" value="P:neuropeptide signaling pathway"/>
    <property type="evidence" value="ECO:0007669"/>
    <property type="project" value="UniProtKB-KW"/>
</dbReference>
<keyword id="KW-0027">Amidation</keyword>
<keyword id="KW-0903">Direct protein sequencing</keyword>
<keyword id="KW-0527">Neuropeptide</keyword>
<keyword id="KW-0964">Secreted</keyword>